<accession>Q6WIH2</accession>
<reference key="1">
    <citation type="journal article" date="2004" name="Microbiology">
        <title>Multiplication of an ancestral gene encoding secreted fungalysin preceded species differentiation in the dermatophytes Trichophyton and Microsporum.</title>
        <authorList>
            <person name="Jousson O."/>
            <person name="Lechenne B."/>
            <person name="Bontems O."/>
            <person name="Capoccia S."/>
            <person name="Mignon B."/>
            <person name="Barblan J."/>
            <person name="Quadroni M."/>
            <person name="Monod M."/>
        </authorList>
    </citation>
    <scope>NUCLEOTIDE SEQUENCE [GENOMIC DNA]</scope>
</reference>
<keyword id="KW-0325">Glycoprotein</keyword>
<keyword id="KW-0378">Hydrolase</keyword>
<keyword id="KW-0479">Metal-binding</keyword>
<keyword id="KW-0482">Metalloprotease</keyword>
<keyword id="KW-0645">Protease</keyword>
<keyword id="KW-0964">Secreted</keyword>
<keyword id="KW-0732">Signal</keyword>
<keyword id="KW-0843">Virulence</keyword>
<keyword id="KW-0862">Zinc</keyword>
<keyword id="KW-0865">Zymogen</keyword>
<protein>
    <recommendedName>
        <fullName>Extracellular metalloproteinase 2</fullName>
        <ecNumber>3.4.24.-</ecNumber>
    </recommendedName>
    <alternativeName>
        <fullName>Fungalysin MEP2</fullName>
    </alternativeName>
</protein>
<comment type="function">
    <text evidence="1">Secreted metalloproteinase probably acting as a virulence factor.</text>
</comment>
<comment type="cofactor">
    <cofactor evidence="1">
        <name>Zn(2+)</name>
        <dbReference type="ChEBI" id="CHEBI:29105"/>
    </cofactor>
    <text evidence="1">Binds 1 zinc ion per subunit.</text>
</comment>
<comment type="subcellular location">
    <subcellularLocation>
        <location evidence="1">Secreted</location>
    </subcellularLocation>
</comment>
<comment type="similarity">
    <text evidence="4">Belongs to the peptidase M36 family.</text>
</comment>
<proteinExistence type="inferred from homology"/>
<dbReference type="EC" id="3.4.24.-"/>
<dbReference type="EMBL" id="AY283575">
    <property type="protein sequence ID" value="AAQ21100.1"/>
    <property type="molecule type" value="Genomic_DNA"/>
</dbReference>
<dbReference type="SMR" id="Q6WIH2"/>
<dbReference type="MEROPS" id="M36.001"/>
<dbReference type="GlyCosmos" id="Q6WIH2">
    <property type="glycosylation" value="1 site, No reported glycans"/>
</dbReference>
<dbReference type="PHI-base" id="PHI:4971"/>
<dbReference type="GO" id="GO:0005576">
    <property type="term" value="C:extracellular region"/>
    <property type="evidence" value="ECO:0007669"/>
    <property type="project" value="UniProtKB-SubCell"/>
</dbReference>
<dbReference type="GO" id="GO:0004222">
    <property type="term" value="F:metalloendopeptidase activity"/>
    <property type="evidence" value="ECO:0007669"/>
    <property type="project" value="InterPro"/>
</dbReference>
<dbReference type="GO" id="GO:0008270">
    <property type="term" value="F:zinc ion binding"/>
    <property type="evidence" value="ECO:0007669"/>
    <property type="project" value="InterPro"/>
</dbReference>
<dbReference type="GO" id="GO:0006508">
    <property type="term" value="P:proteolysis"/>
    <property type="evidence" value="ECO:0007669"/>
    <property type="project" value="UniProtKB-KW"/>
</dbReference>
<dbReference type="CDD" id="cd09596">
    <property type="entry name" value="M36"/>
    <property type="match status" value="1"/>
</dbReference>
<dbReference type="Gene3D" id="3.10.170.10">
    <property type="match status" value="1"/>
</dbReference>
<dbReference type="Gene3D" id="1.10.390.10">
    <property type="entry name" value="Neutral Protease Domain 2"/>
    <property type="match status" value="1"/>
</dbReference>
<dbReference type="InterPro" id="IPR011096">
    <property type="entry name" value="FTP_domain"/>
</dbReference>
<dbReference type="InterPro" id="IPR050371">
    <property type="entry name" value="Fungal_virulence_M36"/>
</dbReference>
<dbReference type="InterPro" id="IPR001842">
    <property type="entry name" value="Peptidase_M36"/>
</dbReference>
<dbReference type="InterPro" id="IPR027268">
    <property type="entry name" value="Peptidase_M4/M1_CTD_sf"/>
</dbReference>
<dbReference type="PANTHER" id="PTHR33478">
    <property type="entry name" value="EXTRACELLULAR METALLOPROTEINASE MEP"/>
    <property type="match status" value="1"/>
</dbReference>
<dbReference type="PANTHER" id="PTHR33478:SF1">
    <property type="entry name" value="EXTRACELLULAR METALLOPROTEINASE MEP"/>
    <property type="match status" value="1"/>
</dbReference>
<dbReference type="Pfam" id="PF07504">
    <property type="entry name" value="FTP"/>
    <property type="match status" value="1"/>
</dbReference>
<dbReference type="Pfam" id="PF02128">
    <property type="entry name" value="Peptidase_M36"/>
    <property type="match status" value="1"/>
</dbReference>
<dbReference type="PRINTS" id="PR00999">
    <property type="entry name" value="FUNGALYSIN"/>
</dbReference>
<dbReference type="SUPFAM" id="SSF55486">
    <property type="entry name" value="Metalloproteases ('zincins'), catalytic domain"/>
    <property type="match status" value="1"/>
</dbReference>
<dbReference type="PROSITE" id="PS00142">
    <property type="entry name" value="ZINC_PROTEASE"/>
    <property type="match status" value="1"/>
</dbReference>
<name>MEP2_ARTBE</name>
<gene>
    <name type="primary">MEP2</name>
</gene>
<feature type="signal peptide" evidence="2">
    <location>
        <begin position="1"/>
        <end position="19"/>
    </location>
</feature>
<feature type="propeptide" id="PRO_0000380842" evidence="1">
    <location>
        <begin position="20"/>
        <end position="244"/>
    </location>
</feature>
<feature type="chain" id="PRO_0000380843" description="Extracellular metalloproteinase 2">
    <location>
        <begin position="245"/>
        <end position="632"/>
    </location>
</feature>
<feature type="active site" evidence="3">
    <location>
        <position position="430"/>
    </location>
</feature>
<feature type="binding site" evidence="3">
    <location>
        <position position="429"/>
    </location>
    <ligand>
        <name>Zn(2+)</name>
        <dbReference type="ChEBI" id="CHEBI:29105"/>
        <note>catalytic</note>
    </ligand>
</feature>
<feature type="binding site" evidence="3">
    <location>
        <position position="433"/>
    </location>
    <ligand>
        <name>Zn(2+)</name>
        <dbReference type="ChEBI" id="CHEBI:29105"/>
        <note>catalytic</note>
    </ligand>
</feature>
<feature type="glycosylation site" description="N-linked (GlcNAc...) asparagine" evidence="2">
    <location>
        <position position="270"/>
    </location>
</feature>
<sequence length="632" mass="69744">MHGLLLAGLAAALPLGVAGLPARQQSGLSPRGIDINPYRFASMAKYSEHKATSQMVHSFSYSKDDDYVATATKLVKSTFPNMTFRTVKDHYIGTNGIGHVHFKQTAHGIDIDNADFNVNIGRDGKVFTFGNSFYEGEMPKTNPLTKRDFADPVKALHGAIKTLKLPVKPQSAKAMPMKEAETFMFEGTSGALSEPMAKLVYIQKDGKLHLTWRVETDVGDNWLLSYVDSKETETVHNVVDYVASADYKVFAWGLNDPTEGQPTMIKDPWNTTGSGSPFTWHGDGEMDYTVTRGNNIAAQDNPSGGGQWENNYRPESPELSFVYEYNEQMEPEQFKDFAITQLFYTTNTFHDLLYSFGFTEEAGNFQMNNNGKGGEGNDFAICNAQDGSGTNNANFATPPDGQNGRMRMYTWTTAQPSRDGDLEAGIVIHEYAHGLSNRLCGGPANSNCLSELEAGGMGEGWGDFYATAIRLKQDDTRETDYTMGEWAANMEGGIREYPYSTNMQTNPYTYADVEGMSEVHGIGTVWATILYDVLWNLIDEHGMSKNIMPKFVNGAPSDGRNLAMKLVLDGMTLMPCNPNFVQARDAIIDADQALTNGQNKCALMKAFSKRGLGSNYKHGKNRVNNFDMPADC</sequence>
<organism>
    <name type="scientific">Arthroderma benhamiae</name>
    <name type="common">Trichophyton mentagrophytes</name>
    <dbReference type="NCBI Taxonomy" id="63400"/>
    <lineage>
        <taxon>Eukaryota</taxon>
        <taxon>Fungi</taxon>
        <taxon>Dikarya</taxon>
        <taxon>Ascomycota</taxon>
        <taxon>Pezizomycotina</taxon>
        <taxon>Eurotiomycetes</taxon>
        <taxon>Eurotiomycetidae</taxon>
        <taxon>Onygenales</taxon>
        <taxon>Arthrodermataceae</taxon>
        <taxon>Trichophyton</taxon>
    </lineage>
</organism>
<evidence type="ECO:0000250" key="1"/>
<evidence type="ECO:0000255" key="2"/>
<evidence type="ECO:0000255" key="3">
    <source>
        <dbReference type="PROSITE-ProRule" id="PRU10095"/>
    </source>
</evidence>
<evidence type="ECO:0000305" key="4"/>